<feature type="chain" id="PRO_0000353268" description="Photosystem II reaction center protein L">
    <location>
        <begin position="1"/>
        <end position="38"/>
    </location>
</feature>
<feature type="transmembrane region" description="Helical" evidence="1">
    <location>
        <begin position="17"/>
        <end position="37"/>
    </location>
</feature>
<name>PSBL_TRACE</name>
<protein>
    <recommendedName>
        <fullName evidence="1">Photosystem II reaction center protein L</fullName>
        <shortName evidence="1">PSII-L</shortName>
    </recommendedName>
</protein>
<geneLocation type="chloroplast"/>
<organism>
    <name type="scientific">Trachelium caeruleum</name>
    <name type="common">Blue throatwort</name>
    <dbReference type="NCBI Taxonomy" id="28494"/>
    <lineage>
        <taxon>Eukaryota</taxon>
        <taxon>Viridiplantae</taxon>
        <taxon>Streptophyta</taxon>
        <taxon>Embryophyta</taxon>
        <taxon>Tracheophyta</taxon>
        <taxon>Spermatophyta</taxon>
        <taxon>Magnoliopsida</taxon>
        <taxon>eudicotyledons</taxon>
        <taxon>Gunneridae</taxon>
        <taxon>Pentapetalae</taxon>
        <taxon>asterids</taxon>
        <taxon>campanulids</taxon>
        <taxon>Asterales</taxon>
        <taxon>Campanulaceae</taxon>
        <taxon>Trachelium</taxon>
    </lineage>
</organism>
<keyword id="KW-0150">Chloroplast</keyword>
<keyword id="KW-0472">Membrane</keyword>
<keyword id="KW-0602">Photosynthesis</keyword>
<keyword id="KW-0604">Photosystem II</keyword>
<keyword id="KW-0934">Plastid</keyword>
<keyword id="KW-0674">Reaction center</keyword>
<keyword id="KW-0793">Thylakoid</keyword>
<keyword id="KW-0812">Transmembrane</keyword>
<keyword id="KW-1133">Transmembrane helix</keyword>
<reference key="1">
    <citation type="journal article" date="2008" name="J. Mol. Evol.">
        <title>Extensive rearrangements in the chloroplast genome of Trachelium caeruleum are associated with repeats and tRNA genes.</title>
        <authorList>
            <person name="Haberle R.C."/>
            <person name="Fourcade H.M."/>
            <person name="Boore J.L."/>
            <person name="Jansen R.K."/>
        </authorList>
    </citation>
    <scope>NUCLEOTIDE SEQUENCE [LARGE SCALE GENOMIC DNA]</scope>
</reference>
<dbReference type="EMBL" id="EU090187">
    <property type="protein sequence ID" value="ABV26496.1"/>
    <property type="molecule type" value="Genomic_DNA"/>
</dbReference>
<dbReference type="RefSeq" id="YP_001718671.1">
    <property type="nucleotide sequence ID" value="NC_010442.1"/>
</dbReference>
<dbReference type="SMR" id="B1NTN6"/>
<dbReference type="GeneID" id="6155944"/>
<dbReference type="GO" id="GO:0009535">
    <property type="term" value="C:chloroplast thylakoid membrane"/>
    <property type="evidence" value="ECO:0007669"/>
    <property type="project" value="UniProtKB-SubCell"/>
</dbReference>
<dbReference type="GO" id="GO:0009539">
    <property type="term" value="C:photosystem II reaction center"/>
    <property type="evidence" value="ECO:0007669"/>
    <property type="project" value="InterPro"/>
</dbReference>
<dbReference type="GO" id="GO:0015979">
    <property type="term" value="P:photosynthesis"/>
    <property type="evidence" value="ECO:0007669"/>
    <property type="project" value="UniProtKB-UniRule"/>
</dbReference>
<dbReference type="HAMAP" id="MF_01317">
    <property type="entry name" value="PSII_PsbL"/>
    <property type="match status" value="1"/>
</dbReference>
<dbReference type="InterPro" id="IPR003372">
    <property type="entry name" value="PSII_PsbL"/>
</dbReference>
<dbReference type="InterPro" id="IPR037266">
    <property type="entry name" value="PSII_PsbL_sf"/>
</dbReference>
<dbReference type="NCBIfam" id="NF001972">
    <property type="entry name" value="PRK00753.1"/>
    <property type="match status" value="1"/>
</dbReference>
<dbReference type="Pfam" id="PF02419">
    <property type="entry name" value="PsbL"/>
    <property type="match status" value="1"/>
</dbReference>
<dbReference type="SUPFAM" id="SSF161017">
    <property type="entry name" value="Photosystem II reaction center protein L, PsbL"/>
    <property type="match status" value="1"/>
</dbReference>
<accession>B1NTN6</accession>
<comment type="function">
    <text evidence="1">One of the components of the core complex of photosystem II (PSII). PSII is a light-driven water:plastoquinone oxidoreductase that uses light energy to abstract electrons from H(2)O, generating O(2) and a proton gradient subsequently used for ATP formation. It consists of a core antenna complex that captures photons, and an electron transfer chain that converts photonic excitation into a charge separation. This subunit is found at the monomer-monomer interface and is required for correct PSII assembly and/or dimerization.</text>
</comment>
<comment type="subunit">
    <text evidence="1">PSII is composed of 1 copy each of membrane proteins PsbA, PsbB, PsbC, PsbD, PsbE, PsbF, PsbH, PsbI, PsbJ, PsbK, PsbL, PsbM, PsbT, PsbX, PsbY, PsbZ, Psb30/Ycf12, at least 3 peripheral proteins of the oxygen-evolving complex and a large number of cofactors. It forms dimeric complexes.</text>
</comment>
<comment type="subcellular location">
    <subcellularLocation>
        <location evidence="1">Plastid</location>
        <location evidence="1">Chloroplast thylakoid membrane</location>
        <topology evidence="1">Single-pass membrane protein</topology>
    </subcellularLocation>
</comment>
<comment type="similarity">
    <text evidence="1">Belongs to the PsbL family.</text>
</comment>
<gene>
    <name evidence="1" type="primary">psbL</name>
</gene>
<proteinExistence type="inferred from homology"/>
<sequence>MTQSNPNEQNVELNRTSLYWGLLLIFVLAVLFSNYFFN</sequence>
<evidence type="ECO:0000255" key="1">
    <source>
        <dbReference type="HAMAP-Rule" id="MF_01317"/>
    </source>
</evidence>